<protein>
    <recommendedName>
        <fullName evidence="1">Orotate phosphoribosyltransferase</fullName>
        <shortName evidence="1">OPRT</shortName>
        <shortName evidence="1">OPRTase</shortName>
        <ecNumber evidence="1">2.4.2.10</ecNumber>
    </recommendedName>
</protein>
<comment type="function">
    <text evidence="1">Catalyzes the transfer of a ribosyl phosphate group from 5-phosphoribose 1-diphosphate to orotate, leading to the formation of orotidine monophosphate (OMP).</text>
</comment>
<comment type="catalytic activity">
    <reaction evidence="1">
        <text>orotidine 5'-phosphate + diphosphate = orotate + 5-phospho-alpha-D-ribose 1-diphosphate</text>
        <dbReference type="Rhea" id="RHEA:10380"/>
        <dbReference type="ChEBI" id="CHEBI:30839"/>
        <dbReference type="ChEBI" id="CHEBI:33019"/>
        <dbReference type="ChEBI" id="CHEBI:57538"/>
        <dbReference type="ChEBI" id="CHEBI:58017"/>
        <dbReference type="EC" id="2.4.2.10"/>
    </reaction>
</comment>
<comment type="cofactor">
    <cofactor evidence="1">
        <name>Mg(2+)</name>
        <dbReference type="ChEBI" id="CHEBI:18420"/>
    </cofactor>
</comment>
<comment type="pathway">
    <text evidence="1">Pyrimidine metabolism; UMP biosynthesis via de novo pathway; UMP from orotate: step 1/2.</text>
</comment>
<comment type="subunit">
    <text evidence="1">Homodimer.</text>
</comment>
<comment type="similarity">
    <text evidence="1">Belongs to the purine/pyrimidine phosphoribosyltransferase family. PyrE subfamily.</text>
</comment>
<reference key="1">
    <citation type="journal article" date="2008" name="J. Bacteriol.">
        <title>Comparative genome sequence analysis of multidrug-resistant Acinetobacter baumannii.</title>
        <authorList>
            <person name="Adams M.D."/>
            <person name="Goglin K."/>
            <person name="Molyneaux N."/>
            <person name="Hujer K.M."/>
            <person name="Lavender H."/>
            <person name="Jamison J.J."/>
            <person name="MacDonald I.J."/>
            <person name="Martin K.M."/>
            <person name="Russo T."/>
            <person name="Campagnari A.A."/>
            <person name="Hujer A.M."/>
            <person name="Bonomo R.A."/>
            <person name="Gill S.R."/>
        </authorList>
    </citation>
    <scope>NUCLEOTIDE SEQUENCE [LARGE SCALE GENOMIC DNA]</scope>
    <source>
        <strain>AB307-0294</strain>
    </source>
</reference>
<name>PYRE_ACIB3</name>
<sequence>MTTPVSFHPQAFIELALSRGVLKFGEFTLKSGRVSPYFFNAGLLNDGEALSLLAQGYADKLTQCENVDVIFGPAYKGIPFVAATAVALSQTHNKSVPWGFNRKEAKDHGEGGILVGAAVEGKKVWIIDDVITAGTAIREVVTILKNAGATIAGVLVALDRQERGQGELSAIQEVQKELEIPVHALITMKDLMDYLEAKGEKEALANMQAYREKYGI</sequence>
<organism>
    <name type="scientific">Acinetobacter baumannii (strain AB307-0294)</name>
    <dbReference type="NCBI Taxonomy" id="557600"/>
    <lineage>
        <taxon>Bacteria</taxon>
        <taxon>Pseudomonadati</taxon>
        <taxon>Pseudomonadota</taxon>
        <taxon>Gammaproteobacteria</taxon>
        <taxon>Moraxellales</taxon>
        <taxon>Moraxellaceae</taxon>
        <taxon>Acinetobacter</taxon>
        <taxon>Acinetobacter calcoaceticus/baumannii complex</taxon>
    </lineage>
</organism>
<feature type="chain" id="PRO_1000138753" description="Orotate phosphoribosyltransferase">
    <location>
        <begin position="1"/>
        <end position="216"/>
    </location>
</feature>
<feature type="binding site" description="in other chain" evidence="1">
    <location>
        <position position="30"/>
    </location>
    <ligand>
        <name>5-phospho-alpha-D-ribose 1-diphosphate</name>
        <dbReference type="ChEBI" id="CHEBI:58017"/>
        <note>ligand shared between dimeric partners</note>
    </ligand>
</feature>
<feature type="binding site" evidence="1">
    <location>
        <begin position="38"/>
        <end position="39"/>
    </location>
    <ligand>
        <name>orotate</name>
        <dbReference type="ChEBI" id="CHEBI:30839"/>
    </ligand>
</feature>
<feature type="binding site" description="in other chain" evidence="1">
    <location>
        <begin position="75"/>
        <end position="76"/>
    </location>
    <ligand>
        <name>5-phospho-alpha-D-ribose 1-diphosphate</name>
        <dbReference type="ChEBI" id="CHEBI:58017"/>
        <note>ligand shared between dimeric partners</note>
    </ligand>
</feature>
<feature type="binding site" evidence="1">
    <location>
        <position position="102"/>
    </location>
    <ligand>
        <name>5-phospho-alpha-D-ribose 1-diphosphate</name>
        <dbReference type="ChEBI" id="CHEBI:58017"/>
        <note>ligand shared between dimeric partners</note>
    </ligand>
</feature>
<feature type="binding site" description="in other chain" evidence="1">
    <location>
        <position position="103"/>
    </location>
    <ligand>
        <name>5-phospho-alpha-D-ribose 1-diphosphate</name>
        <dbReference type="ChEBI" id="CHEBI:58017"/>
        <note>ligand shared between dimeric partners</note>
    </ligand>
</feature>
<feature type="binding site" evidence="1">
    <location>
        <position position="106"/>
    </location>
    <ligand>
        <name>5-phospho-alpha-D-ribose 1-diphosphate</name>
        <dbReference type="ChEBI" id="CHEBI:58017"/>
        <note>ligand shared between dimeric partners</note>
    </ligand>
</feature>
<feature type="binding site" evidence="1">
    <location>
        <position position="108"/>
    </location>
    <ligand>
        <name>5-phospho-alpha-D-ribose 1-diphosphate</name>
        <dbReference type="ChEBI" id="CHEBI:58017"/>
        <note>ligand shared between dimeric partners</note>
    </ligand>
</feature>
<feature type="binding site" description="in other chain" evidence="1">
    <location>
        <begin position="128"/>
        <end position="136"/>
    </location>
    <ligand>
        <name>5-phospho-alpha-D-ribose 1-diphosphate</name>
        <dbReference type="ChEBI" id="CHEBI:58017"/>
        <note>ligand shared between dimeric partners</note>
    </ligand>
</feature>
<feature type="binding site" evidence="1">
    <location>
        <position position="132"/>
    </location>
    <ligand>
        <name>orotate</name>
        <dbReference type="ChEBI" id="CHEBI:30839"/>
    </ligand>
</feature>
<feature type="binding site" evidence="1">
    <location>
        <position position="160"/>
    </location>
    <ligand>
        <name>orotate</name>
        <dbReference type="ChEBI" id="CHEBI:30839"/>
    </ligand>
</feature>
<keyword id="KW-0328">Glycosyltransferase</keyword>
<keyword id="KW-0460">Magnesium</keyword>
<keyword id="KW-0665">Pyrimidine biosynthesis</keyword>
<keyword id="KW-0808">Transferase</keyword>
<accession>B7GV69</accession>
<proteinExistence type="inferred from homology"/>
<evidence type="ECO:0000255" key="1">
    <source>
        <dbReference type="HAMAP-Rule" id="MF_01208"/>
    </source>
</evidence>
<dbReference type="EC" id="2.4.2.10" evidence="1"/>
<dbReference type="EMBL" id="CP001172">
    <property type="protein sequence ID" value="ACJ57617.1"/>
    <property type="molecule type" value="Genomic_DNA"/>
</dbReference>
<dbReference type="RefSeq" id="WP_000211300.1">
    <property type="nucleotide sequence ID" value="NZ_CP001172.1"/>
</dbReference>
<dbReference type="SMR" id="B7GV69"/>
<dbReference type="HOGENOM" id="CLU_074878_0_1_6"/>
<dbReference type="UniPathway" id="UPA00070">
    <property type="reaction ID" value="UER00119"/>
</dbReference>
<dbReference type="Proteomes" id="UP000006924">
    <property type="component" value="Chromosome"/>
</dbReference>
<dbReference type="GO" id="GO:0005737">
    <property type="term" value="C:cytoplasm"/>
    <property type="evidence" value="ECO:0007669"/>
    <property type="project" value="TreeGrafter"/>
</dbReference>
<dbReference type="GO" id="GO:0000287">
    <property type="term" value="F:magnesium ion binding"/>
    <property type="evidence" value="ECO:0007669"/>
    <property type="project" value="UniProtKB-UniRule"/>
</dbReference>
<dbReference type="GO" id="GO:0004588">
    <property type="term" value="F:orotate phosphoribosyltransferase activity"/>
    <property type="evidence" value="ECO:0007669"/>
    <property type="project" value="UniProtKB-UniRule"/>
</dbReference>
<dbReference type="GO" id="GO:0006207">
    <property type="term" value="P:'de novo' pyrimidine nucleobase biosynthetic process"/>
    <property type="evidence" value="ECO:0007669"/>
    <property type="project" value="TreeGrafter"/>
</dbReference>
<dbReference type="GO" id="GO:0044205">
    <property type="term" value="P:'de novo' UMP biosynthetic process"/>
    <property type="evidence" value="ECO:0007669"/>
    <property type="project" value="UniProtKB-UniRule"/>
</dbReference>
<dbReference type="GO" id="GO:0046132">
    <property type="term" value="P:pyrimidine ribonucleoside biosynthetic process"/>
    <property type="evidence" value="ECO:0007669"/>
    <property type="project" value="TreeGrafter"/>
</dbReference>
<dbReference type="CDD" id="cd06223">
    <property type="entry name" value="PRTases_typeI"/>
    <property type="match status" value="1"/>
</dbReference>
<dbReference type="FunFam" id="3.40.50.2020:FF:000008">
    <property type="entry name" value="Orotate phosphoribosyltransferase"/>
    <property type="match status" value="1"/>
</dbReference>
<dbReference type="Gene3D" id="3.40.50.2020">
    <property type="match status" value="1"/>
</dbReference>
<dbReference type="HAMAP" id="MF_01208">
    <property type="entry name" value="PyrE"/>
    <property type="match status" value="1"/>
</dbReference>
<dbReference type="InterPro" id="IPR023031">
    <property type="entry name" value="OPRT"/>
</dbReference>
<dbReference type="InterPro" id="IPR004467">
    <property type="entry name" value="Or_phspho_trans_dom"/>
</dbReference>
<dbReference type="InterPro" id="IPR000836">
    <property type="entry name" value="PRibTrfase_dom"/>
</dbReference>
<dbReference type="InterPro" id="IPR029057">
    <property type="entry name" value="PRTase-like"/>
</dbReference>
<dbReference type="NCBIfam" id="TIGR00336">
    <property type="entry name" value="pyrE"/>
    <property type="match status" value="1"/>
</dbReference>
<dbReference type="PANTHER" id="PTHR46683">
    <property type="entry name" value="OROTATE PHOSPHORIBOSYLTRANSFERASE 1-RELATED"/>
    <property type="match status" value="1"/>
</dbReference>
<dbReference type="PANTHER" id="PTHR46683:SF1">
    <property type="entry name" value="OROTATE PHOSPHORIBOSYLTRANSFERASE 1-RELATED"/>
    <property type="match status" value="1"/>
</dbReference>
<dbReference type="Pfam" id="PF00156">
    <property type="entry name" value="Pribosyltran"/>
    <property type="match status" value="1"/>
</dbReference>
<dbReference type="SUPFAM" id="SSF53271">
    <property type="entry name" value="PRTase-like"/>
    <property type="match status" value="1"/>
</dbReference>
<gene>
    <name evidence="1" type="primary">pyrE</name>
    <name type="ordered locus">ABBFA_000141</name>
</gene>